<protein>
    <recommendedName>
        <fullName evidence="1">Histidine--tRNA ligase</fullName>
        <ecNumber evidence="1">6.1.1.21</ecNumber>
    </recommendedName>
    <alternativeName>
        <fullName evidence="1">Histidyl-tRNA synthetase</fullName>
        <shortName evidence="1">HisRS</shortName>
    </alternativeName>
</protein>
<proteinExistence type="inferred from homology"/>
<comment type="catalytic activity">
    <reaction evidence="1">
        <text>tRNA(His) + L-histidine + ATP = L-histidyl-tRNA(His) + AMP + diphosphate + H(+)</text>
        <dbReference type="Rhea" id="RHEA:17313"/>
        <dbReference type="Rhea" id="RHEA-COMP:9665"/>
        <dbReference type="Rhea" id="RHEA-COMP:9689"/>
        <dbReference type="ChEBI" id="CHEBI:15378"/>
        <dbReference type="ChEBI" id="CHEBI:30616"/>
        <dbReference type="ChEBI" id="CHEBI:33019"/>
        <dbReference type="ChEBI" id="CHEBI:57595"/>
        <dbReference type="ChEBI" id="CHEBI:78442"/>
        <dbReference type="ChEBI" id="CHEBI:78527"/>
        <dbReference type="ChEBI" id="CHEBI:456215"/>
        <dbReference type="EC" id="6.1.1.21"/>
    </reaction>
</comment>
<comment type="subunit">
    <text evidence="1">Homodimer.</text>
</comment>
<comment type="subcellular location">
    <subcellularLocation>
        <location evidence="1">Cytoplasm</location>
    </subcellularLocation>
</comment>
<comment type="similarity">
    <text evidence="1">Belongs to the class-II aminoacyl-tRNA synthetase family.</text>
</comment>
<evidence type="ECO:0000255" key="1">
    <source>
        <dbReference type="HAMAP-Rule" id="MF_00127"/>
    </source>
</evidence>
<gene>
    <name evidence="1" type="primary">hisS</name>
    <name type="ordered locus">CTLon_0800</name>
</gene>
<dbReference type="EC" id="6.1.1.21" evidence="1"/>
<dbReference type="EMBL" id="AM884177">
    <property type="protein sequence ID" value="CAP07197.1"/>
    <property type="molecule type" value="Genomic_DNA"/>
</dbReference>
<dbReference type="RefSeq" id="WP_009873887.1">
    <property type="nucleotide sequence ID" value="NC_010280.2"/>
</dbReference>
<dbReference type="SMR" id="B0B9Z6"/>
<dbReference type="KEGG" id="ctl:CTLon_0800"/>
<dbReference type="HOGENOM" id="CLU_025113_1_1_0"/>
<dbReference type="Proteomes" id="UP001154401">
    <property type="component" value="Chromosome"/>
</dbReference>
<dbReference type="GO" id="GO:0005737">
    <property type="term" value="C:cytoplasm"/>
    <property type="evidence" value="ECO:0007669"/>
    <property type="project" value="UniProtKB-SubCell"/>
</dbReference>
<dbReference type="GO" id="GO:0005524">
    <property type="term" value="F:ATP binding"/>
    <property type="evidence" value="ECO:0007669"/>
    <property type="project" value="UniProtKB-UniRule"/>
</dbReference>
<dbReference type="GO" id="GO:0004821">
    <property type="term" value="F:histidine-tRNA ligase activity"/>
    <property type="evidence" value="ECO:0007669"/>
    <property type="project" value="UniProtKB-UniRule"/>
</dbReference>
<dbReference type="GO" id="GO:0006427">
    <property type="term" value="P:histidyl-tRNA aminoacylation"/>
    <property type="evidence" value="ECO:0007669"/>
    <property type="project" value="UniProtKB-UniRule"/>
</dbReference>
<dbReference type="CDD" id="cd00773">
    <property type="entry name" value="HisRS-like_core"/>
    <property type="match status" value="1"/>
</dbReference>
<dbReference type="FunFam" id="3.30.930.10:FF:000166">
    <property type="entry name" value="Histidine--tRNA ligase"/>
    <property type="match status" value="1"/>
</dbReference>
<dbReference type="Gene3D" id="3.40.50.800">
    <property type="entry name" value="Anticodon-binding domain"/>
    <property type="match status" value="1"/>
</dbReference>
<dbReference type="Gene3D" id="3.30.930.10">
    <property type="entry name" value="Bira Bifunctional Protein, Domain 2"/>
    <property type="match status" value="1"/>
</dbReference>
<dbReference type="HAMAP" id="MF_00127">
    <property type="entry name" value="His_tRNA_synth"/>
    <property type="match status" value="1"/>
</dbReference>
<dbReference type="InterPro" id="IPR006195">
    <property type="entry name" value="aa-tRNA-synth_II"/>
</dbReference>
<dbReference type="InterPro" id="IPR045864">
    <property type="entry name" value="aa-tRNA-synth_II/BPL/LPL"/>
</dbReference>
<dbReference type="InterPro" id="IPR004154">
    <property type="entry name" value="Anticodon-bd"/>
</dbReference>
<dbReference type="InterPro" id="IPR036621">
    <property type="entry name" value="Anticodon-bd_dom_sf"/>
</dbReference>
<dbReference type="InterPro" id="IPR015807">
    <property type="entry name" value="His-tRNA-ligase"/>
</dbReference>
<dbReference type="InterPro" id="IPR041715">
    <property type="entry name" value="HisRS-like_core"/>
</dbReference>
<dbReference type="InterPro" id="IPR004516">
    <property type="entry name" value="HisRS/HisZ"/>
</dbReference>
<dbReference type="NCBIfam" id="TIGR00442">
    <property type="entry name" value="hisS"/>
    <property type="match status" value="1"/>
</dbReference>
<dbReference type="PANTHER" id="PTHR43707:SF1">
    <property type="entry name" value="HISTIDINE--TRNA LIGASE, MITOCHONDRIAL-RELATED"/>
    <property type="match status" value="1"/>
</dbReference>
<dbReference type="PANTHER" id="PTHR43707">
    <property type="entry name" value="HISTIDYL-TRNA SYNTHETASE"/>
    <property type="match status" value="1"/>
</dbReference>
<dbReference type="Pfam" id="PF03129">
    <property type="entry name" value="HGTP_anticodon"/>
    <property type="match status" value="1"/>
</dbReference>
<dbReference type="Pfam" id="PF13393">
    <property type="entry name" value="tRNA-synt_His"/>
    <property type="match status" value="1"/>
</dbReference>
<dbReference type="PIRSF" id="PIRSF001549">
    <property type="entry name" value="His-tRNA_synth"/>
    <property type="match status" value="1"/>
</dbReference>
<dbReference type="SUPFAM" id="SSF52954">
    <property type="entry name" value="Class II aaRS ABD-related"/>
    <property type="match status" value="1"/>
</dbReference>
<dbReference type="SUPFAM" id="SSF55681">
    <property type="entry name" value="Class II aaRS and biotin synthetases"/>
    <property type="match status" value="1"/>
</dbReference>
<dbReference type="PROSITE" id="PS50862">
    <property type="entry name" value="AA_TRNA_LIGASE_II"/>
    <property type="match status" value="1"/>
</dbReference>
<organism>
    <name type="scientific">Chlamydia trachomatis serovar L2b (strain UCH-1/proctitis)</name>
    <dbReference type="NCBI Taxonomy" id="471473"/>
    <lineage>
        <taxon>Bacteria</taxon>
        <taxon>Pseudomonadati</taxon>
        <taxon>Chlamydiota</taxon>
        <taxon>Chlamydiia</taxon>
        <taxon>Chlamydiales</taxon>
        <taxon>Chlamydiaceae</taxon>
        <taxon>Chlamydia/Chlamydophila group</taxon>
        <taxon>Chlamydia</taxon>
    </lineage>
</organism>
<feature type="chain" id="PRO_1000095540" description="Histidine--tRNA ligase">
    <location>
        <begin position="1"/>
        <end position="428"/>
    </location>
</feature>
<sequence>MSNALPKGVFDIFPYVTSPKNLWRNSSLWKRVEHAAHRICNLYGFDEIRTPVFEKTETFLRVGEHSDIVKKEVYTFLDKKGRSLTLRPEGTAAVVRALLDHSADMRKDNKFYYILPMFRYERQQSGRYRQHHQFGLEAIGVRHPLRDAEVLSLLWDFYAAVGLQHMQIHVNFLGGQKTRARYDEALREFFRKDLDRLSPLSQERYHANLLRILDSKEPEDQEFIEKAPSILDYIDDRDLSYFDAVLAQLKALGIPFAINPRLVRGLDYYTDLVFEAVTVVGERSYALGGGGRYDELVAQSGGPSMPAFGFGVGLERVIQTLLEQGNSLSTSTRRLRLIPMDEQADAFCFSWANRLRNLGIATEVDWSHKKPKLSLKDAADQQVSFVCLLGEQELATKQFIVKDMSLHQSFSGAQQDVEQRLVYEVQNA</sequence>
<keyword id="KW-0030">Aminoacyl-tRNA synthetase</keyword>
<keyword id="KW-0067">ATP-binding</keyword>
<keyword id="KW-0963">Cytoplasm</keyword>
<keyword id="KW-0436">Ligase</keyword>
<keyword id="KW-0547">Nucleotide-binding</keyword>
<keyword id="KW-0648">Protein biosynthesis</keyword>
<accession>B0B9Z6</accession>
<name>SYH_CHLTB</name>
<reference key="1">
    <citation type="journal article" date="2008" name="Genome Res.">
        <title>Chlamydia trachomatis: genome sequence analysis of lymphogranuloma venereum isolates.</title>
        <authorList>
            <person name="Thomson N.R."/>
            <person name="Holden M.T.G."/>
            <person name="Carder C."/>
            <person name="Lennard N."/>
            <person name="Lockey S.J."/>
            <person name="Marsh P."/>
            <person name="Skipp P."/>
            <person name="O'Connor C.D."/>
            <person name="Goodhead I."/>
            <person name="Norbertzcak H."/>
            <person name="Harris B."/>
            <person name="Ormond D."/>
            <person name="Rance R."/>
            <person name="Quail M.A."/>
            <person name="Parkhill J."/>
            <person name="Stephens R.S."/>
            <person name="Clarke I.N."/>
        </authorList>
    </citation>
    <scope>NUCLEOTIDE SEQUENCE [LARGE SCALE GENOMIC DNA]</scope>
    <source>
        <strain>UCH-1/proctitis</strain>
    </source>
</reference>